<feature type="chain" id="PRO_0000293570" description="HTH-type transcriptional repressor FabR">
    <location>
        <begin position="1"/>
        <end position="210"/>
    </location>
</feature>
<feature type="domain" description="HTH tetR-type" evidence="1">
    <location>
        <begin position="10"/>
        <end position="70"/>
    </location>
</feature>
<feature type="DNA-binding region" description="H-T-H motif" evidence="1">
    <location>
        <begin position="33"/>
        <end position="52"/>
    </location>
</feature>
<dbReference type="EMBL" id="AE017220">
    <property type="protein sequence ID" value="AAX67922.1"/>
    <property type="status" value="ALT_INIT"/>
    <property type="molecule type" value="Genomic_DNA"/>
</dbReference>
<dbReference type="SMR" id="Q57H90"/>
<dbReference type="KEGG" id="sec:SCH_4016"/>
<dbReference type="HOGENOM" id="CLU_081861_0_0_6"/>
<dbReference type="Proteomes" id="UP000000538">
    <property type="component" value="Chromosome"/>
</dbReference>
<dbReference type="GO" id="GO:0005737">
    <property type="term" value="C:cytoplasm"/>
    <property type="evidence" value="ECO:0007669"/>
    <property type="project" value="UniProtKB-SubCell"/>
</dbReference>
<dbReference type="GO" id="GO:0003677">
    <property type="term" value="F:DNA binding"/>
    <property type="evidence" value="ECO:0007669"/>
    <property type="project" value="UniProtKB-KW"/>
</dbReference>
<dbReference type="GO" id="GO:0003700">
    <property type="term" value="F:DNA-binding transcription factor activity"/>
    <property type="evidence" value="ECO:0007669"/>
    <property type="project" value="UniProtKB-UniRule"/>
</dbReference>
<dbReference type="GO" id="GO:0006633">
    <property type="term" value="P:fatty acid biosynthetic process"/>
    <property type="evidence" value="ECO:0007669"/>
    <property type="project" value="UniProtKB-UniRule"/>
</dbReference>
<dbReference type="GO" id="GO:0045717">
    <property type="term" value="P:negative regulation of fatty acid biosynthetic process"/>
    <property type="evidence" value="ECO:0007669"/>
    <property type="project" value="UniProtKB-UniRule"/>
</dbReference>
<dbReference type="FunFam" id="1.10.10.60:FF:000034">
    <property type="entry name" value="HTH-type transcriptional repressor FabR"/>
    <property type="match status" value="1"/>
</dbReference>
<dbReference type="FunFam" id="1.10.357.10:FF:000001">
    <property type="entry name" value="HTH-type transcriptional repressor FabR"/>
    <property type="match status" value="1"/>
</dbReference>
<dbReference type="Gene3D" id="1.10.10.60">
    <property type="entry name" value="Homeodomain-like"/>
    <property type="match status" value="1"/>
</dbReference>
<dbReference type="Gene3D" id="1.10.357.10">
    <property type="entry name" value="Tetracycline Repressor, domain 2"/>
    <property type="match status" value="1"/>
</dbReference>
<dbReference type="HAMAP" id="MF_01190">
    <property type="entry name" value="HTH_type_FabR"/>
    <property type="match status" value="1"/>
</dbReference>
<dbReference type="InterPro" id="IPR054129">
    <property type="entry name" value="DesT_TetR_C"/>
</dbReference>
<dbReference type="InterPro" id="IPR009057">
    <property type="entry name" value="Homeodomain-like_sf"/>
</dbReference>
<dbReference type="InterPro" id="IPR001647">
    <property type="entry name" value="HTH_TetR"/>
</dbReference>
<dbReference type="InterPro" id="IPR050692">
    <property type="entry name" value="HTH_transcr_repressor_FabR"/>
</dbReference>
<dbReference type="InterPro" id="IPR023764">
    <property type="entry name" value="Tscrpt_reg_HTH_FabR"/>
</dbReference>
<dbReference type="NCBIfam" id="NF008402">
    <property type="entry name" value="PRK11202.1"/>
    <property type="match status" value="1"/>
</dbReference>
<dbReference type="PANTHER" id="PTHR47752">
    <property type="entry name" value="HTH-TYPE TRANSCRIPTIONAL REPRESSOR FABR"/>
    <property type="match status" value="1"/>
</dbReference>
<dbReference type="PANTHER" id="PTHR47752:SF1">
    <property type="entry name" value="HTH-TYPE TRANSCRIPTIONAL REPRESSOR FABR"/>
    <property type="match status" value="1"/>
</dbReference>
<dbReference type="Pfam" id="PF21943">
    <property type="entry name" value="TetR_C_46"/>
    <property type="match status" value="1"/>
</dbReference>
<dbReference type="Pfam" id="PF00440">
    <property type="entry name" value="TetR_N"/>
    <property type="match status" value="1"/>
</dbReference>
<dbReference type="SUPFAM" id="SSF46689">
    <property type="entry name" value="Homeodomain-like"/>
    <property type="match status" value="1"/>
</dbReference>
<dbReference type="PROSITE" id="PS50977">
    <property type="entry name" value="HTH_TETR_2"/>
    <property type="match status" value="1"/>
</dbReference>
<name>FABR_SALCH</name>
<sequence length="210" mass="23910">MGVRAQQKEKTRRSLVEAAFSQLSAERSFASLSLREVAREAGIAPTSFYRHFRDVDELGLTMVDESGLMLRQLMRQARQRIAKGGSVIRTSVSTFMEFIGNNPNAFRLLLRERSGTSAAFRAAVAREIQHFIAELADYLELENHMPRAFTEAQAEAMVTIVFSAGAEALDIGAEQRRQLEERLVLQLRMIAKGAYYWYRREQEKIAHHSE</sequence>
<keyword id="KW-0963">Cytoplasm</keyword>
<keyword id="KW-0238">DNA-binding</keyword>
<keyword id="KW-0275">Fatty acid biosynthesis</keyword>
<keyword id="KW-0276">Fatty acid metabolism</keyword>
<keyword id="KW-0444">Lipid biosynthesis</keyword>
<keyword id="KW-0443">Lipid metabolism</keyword>
<keyword id="KW-0678">Repressor</keyword>
<keyword id="KW-0804">Transcription</keyword>
<keyword id="KW-0805">Transcription regulation</keyword>
<proteinExistence type="inferred from homology"/>
<evidence type="ECO:0000255" key="1">
    <source>
        <dbReference type="HAMAP-Rule" id="MF_01190"/>
    </source>
</evidence>
<evidence type="ECO:0000305" key="2"/>
<organism>
    <name type="scientific">Salmonella choleraesuis (strain SC-B67)</name>
    <dbReference type="NCBI Taxonomy" id="321314"/>
    <lineage>
        <taxon>Bacteria</taxon>
        <taxon>Pseudomonadati</taxon>
        <taxon>Pseudomonadota</taxon>
        <taxon>Gammaproteobacteria</taxon>
        <taxon>Enterobacterales</taxon>
        <taxon>Enterobacteriaceae</taxon>
        <taxon>Salmonella</taxon>
    </lineage>
</organism>
<comment type="function">
    <text evidence="1">Represses the transcription of fabB, involved in unsaturated fatty acid (UFA) biosynthesis. By controlling UFA production, FabR directly influences the physical properties of the membrane bilayer.</text>
</comment>
<comment type="subunit">
    <text evidence="1">Homodimer.</text>
</comment>
<comment type="subcellular location">
    <subcellularLocation>
        <location evidence="1">Cytoplasm</location>
    </subcellularLocation>
</comment>
<comment type="sequence caution" evidence="2">
    <conflict type="erroneous initiation">
        <sequence resource="EMBL-CDS" id="AAX67922"/>
    </conflict>
</comment>
<protein>
    <recommendedName>
        <fullName evidence="1">HTH-type transcriptional repressor FabR</fullName>
    </recommendedName>
</protein>
<gene>
    <name evidence="1" type="primary">fabR</name>
    <name type="ordered locus">SCH_4016</name>
</gene>
<accession>Q57H90</accession>
<reference key="1">
    <citation type="journal article" date="2005" name="Nucleic Acids Res.">
        <title>The genome sequence of Salmonella enterica serovar Choleraesuis, a highly invasive and resistant zoonotic pathogen.</title>
        <authorList>
            <person name="Chiu C.-H."/>
            <person name="Tang P."/>
            <person name="Chu C."/>
            <person name="Hu S."/>
            <person name="Bao Q."/>
            <person name="Yu J."/>
            <person name="Chou Y.-Y."/>
            <person name="Wang H.-S."/>
            <person name="Lee Y.-S."/>
        </authorList>
    </citation>
    <scope>NUCLEOTIDE SEQUENCE [LARGE SCALE GENOMIC DNA]</scope>
    <source>
        <strain>SC-B67</strain>
    </source>
</reference>